<feature type="signal peptide" evidence="1">
    <location>
        <begin position="1"/>
        <end position="18"/>
    </location>
</feature>
<feature type="chain" id="PRO_0000005566" description="Transcobalamin-2">
    <location>
        <begin position="19"/>
        <end position="427"/>
    </location>
</feature>
<feature type="binding site" evidence="1">
    <location>
        <position position="104"/>
    </location>
    <ligand>
        <name>cob(II)alamin</name>
        <dbReference type="ChEBI" id="CHEBI:16304"/>
    </ligand>
</feature>
<feature type="binding site" evidence="1">
    <location>
        <begin position="152"/>
        <end position="156"/>
    </location>
    <ligand>
        <name>cob(II)alamin</name>
        <dbReference type="ChEBI" id="CHEBI:16304"/>
    </ligand>
</feature>
<feature type="binding site" evidence="1">
    <location>
        <begin position="190"/>
        <end position="194"/>
    </location>
    <ligand>
        <name>cob(II)alamin</name>
        <dbReference type="ChEBI" id="CHEBI:16304"/>
    </ligand>
</feature>
<feature type="binding site" description="axial binding residue" evidence="1">
    <location>
        <position position="190"/>
    </location>
    <ligand>
        <name>cob(II)alamin</name>
        <dbReference type="ChEBI" id="CHEBI:16304"/>
    </ligand>
    <ligandPart>
        <name>Co</name>
        <dbReference type="ChEBI" id="CHEBI:27638"/>
    </ligandPart>
</feature>
<feature type="binding site" evidence="1">
    <location>
        <position position="242"/>
    </location>
    <ligand>
        <name>cob(II)alamin</name>
        <dbReference type="ChEBI" id="CHEBI:16304"/>
    </ligand>
</feature>
<feature type="binding site" evidence="1">
    <location>
        <position position="245"/>
    </location>
    <ligand>
        <name>cob(II)alamin</name>
        <dbReference type="ChEBI" id="CHEBI:16304"/>
    </ligand>
</feature>
<feature type="binding site" evidence="1">
    <location>
        <position position="291"/>
    </location>
    <ligand>
        <name>cob(II)alamin</name>
        <dbReference type="ChEBI" id="CHEBI:16304"/>
    </ligand>
</feature>
<feature type="binding site" evidence="1">
    <location>
        <begin position="395"/>
        <end position="397"/>
    </location>
    <ligand>
        <name>cob(II)alamin</name>
        <dbReference type="ChEBI" id="CHEBI:16304"/>
    </ligand>
</feature>
<feature type="disulfide bond" evidence="1">
    <location>
        <begin position="21"/>
        <end position="267"/>
    </location>
</feature>
<feature type="disulfide bond" evidence="1">
    <location>
        <begin position="116"/>
        <end position="309"/>
    </location>
</feature>
<feature type="disulfide bond" evidence="1">
    <location>
        <begin position="165"/>
        <end position="205"/>
    </location>
</feature>
<organism>
    <name type="scientific">Pongo abelii</name>
    <name type="common">Sumatran orangutan</name>
    <name type="synonym">Pongo pygmaeus abelii</name>
    <dbReference type="NCBI Taxonomy" id="9601"/>
    <lineage>
        <taxon>Eukaryota</taxon>
        <taxon>Metazoa</taxon>
        <taxon>Chordata</taxon>
        <taxon>Craniata</taxon>
        <taxon>Vertebrata</taxon>
        <taxon>Euteleostomi</taxon>
        <taxon>Mammalia</taxon>
        <taxon>Eutheria</taxon>
        <taxon>Euarchontoglires</taxon>
        <taxon>Primates</taxon>
        <taxon>Haplorrhini</taxon>
        <taxon>Catarrhini</taxon>
        <taxon>Hominidae</taxon>
        <taxon>Pongo</taxon>
    </lineage>
</organism>
<proteinExistence type="evidence at transcript level"/>
<accession>Q5REL7</accession>
<sequence>MRHLGALLFLLGVLGALAEICEIPEVDSHLVEKLGQHLLPWMDRLSLEHLNPSIYVDLRLSSLQAGTKEELYLHSLKLGYQQCLLGSAFSEDDGDCQGKPSMGQLALYLLALRANCEFVRGHKGDKLVSQLKRFLEDEKRAIGHDHKGHPHTSYYQYGLGILALCLHQKRVHDSVVDKLLYALEPFHQGHHSVDTAAMAGLAFTCLKRSNFNPGRRQRITMAVRTVREKILKAQTPEGHFGNVYSTPLALQFLMTSPMPGAELGTACLKARVALFASLQDGAFQNALMISQLLPVLNHKTYIDLIFPDCLAPRVMLEPAAETIPQAQEIISVTLQVLSLLPPYRQSISVLAGSTVEDVLKKAHELGGFTYETQASLSGPYLISVMGKAAGEREFWQLLRDPNTPLLQGIADYRPKDGETIELRLVSW</sequence>
<comment type="function">
    <text evidence="2">Primary vitamin B12-binding and transport protein. Delivers cobalamin to cells.</text>
</comment>
<comment type="subunit">
    <text evidence="2">Interacts with CD320 (via LDL-receptor class A domains).</text>
</comment>
<comment type="subcellular location">
    <subcellularLocation>
        <location evidence="2">Secreted</location>
    </subcellularLocation>
</comment>
<comment type="similarity">
    <text evidence="3">Belongs to the eukaryotic cobalamin transport proteins family.</text>
</comment>
<protein>
    <recommendedName>
        <fullName>Transcobalamin-2</fullName>
        <shortName>TC-2</shortName>
    </recommendedName>
    <alternativeName>
        <fullName>Transcobalamin II</fullName>
        <shortName>TC II</shortName>
        <shortName>TCII</shortName>
    </alternativeName>
</protein>
<keyword id="KW-0170">Cobalt</keyword>
<keyword id="KW-0171">Cobalt transport</keyword>
<keyword id="KW-1015">Disulfide bond</keyword>
<keyword id="KW-0406">Ion transport</keyword>
<keyword id="KW-0479">Metal-binding</keyword>
<keyword id="KW-1185">Reference proteome</keyword>
<keyword id="KW-0964">Secreted</keyword>
<keyword id="KW-0732">Signal</keyword>
<keyword id="KW-0813">Transport</keyword>
<name>TCO2_PONAB</name>
<gene>
    <name type="primary">TCN2</name>
</gene>
<reference key="1">
    <citation type="submission" date="2004-11" db="EMBL/GenBank/DDBJ databases">
        <authorList>
            <consortium name="The German cDNA consortium"/>
        </authorList>
    </citation>
    <scope>NUCLEOTIDE SEQUENCE [LARGE SCALE MRNA]</scope>
    <source>
        <tissue>Heart</tissue>
    </source>
</reference>
<dbReference type="EMBL" id="CR857507">
    <property type="protein sequence ID" value="CAH89790.1"/>
    <property type="molecule type" value="mRNA"/>
</dbReference>
<dbReference type="RefSeq" id="NP_001124823.1">
    <property type="nucleotide sequence ID" value="NM_001131351.1"/>
</dbReference>
<dbReference type="SMR" id="Q5REL7"/>
<dbReference type="FunCoup" id="Q5REL7">
    <property type="interactions" value="115"/>
</dbReference>
<dbReference type="STRING" id="9601.ENSPPYP00000013071"/>
<dbReference type="GeneID" id="100171681"/>
<dbReference type="KEGG" id="pon:100171681"/>
<dbReference type="CTD" id="6948"/>
<dbReference type="eggNOG" id="ENOG502QSED">
    <property type="taxonomic scope" value="Eukaryota"/>
</dbReference>
<dbReference type="InParanoid" id="Q5REL7"/>
<dbReference type="OrthoDB" id="9440006at2759"/>
<dbReference type="Proteomes" id="UP000001595">
    <property type="component" value="Unplaced"/>
</dbReference>
<dbReference type="GO" id="GO:0005615">
    <property type="term" value="C:extracellular space"/>
    <property type="evidence" value="ECO:0000250"/>
    <property type="project" value="UniProtKB"/>
</dbReference>
<dbReference type="GO" id="GO:0031419">
    <property type="term" value="F:cobalamin binding"/>
    <property type="evidence" value="ECO:0000250"/>
    <property type="project" value="UniProtKB"/>
</dbReference>
<dbReference type="GO" id="GO:0046872">
    <property type="term" value="F:metal ion binding"/>
    <property type="evidence" value="ECO:0007669"/>
    <property type="project" value="UniProtKB-KW"/>
</dbReference>
<dbReference type="GO" id="GO:0015889">
    <property type="term" value="P:cobalamin transport"/>
    <property type="evidence" value="ECO:0000250"/>
    <property type="project" value="UniProtKB"/>
</dbReference>
<dbReference type="GO" id="GO:0006824">
    <property type="term" value="P:cobalt ion transport"/>
    <property type="evidence" value="ECO:0007669"/>
    <property type="project" value="UniProtKB-KW"/>
</dbReference>
<dbReference type="FunFam" id="1.50.10.20:FF:000013">
    <property type="entry name" value="Transcobalamin-2"/>
    <property type="match status" value="1"/>
</dbReference>
<dbReference type="FunFam" id="2.170.130.30:FF:000002">
    <property type="entry name" value="Transcobalamin-2"/>
    <property type="match status" value="1"/>
</dbReference>
<dbReference type="Gene3D" id="1.50.10.20">
    <property type="match status" value="1"/>
</dbReference>
<dbReference type="Gene3D" id="2.170.130.30">
    <property type="match status" value="1"/>
</dbReference>
<dbReference type="InterPro" id="IPR002157">
    <property type="entry name" value="Cbl-bd_prot"/>
</dbReference>
<dbReference type="InterPro" id="IPR051588">
    <property type="entry name" value="Cobalamin_Transport"/>
</dbReference>
<dbReference type="PANTHER" id="PTHR10559">
    <property type="entry name" value="TRANSCOBALAMIN-1/GASTRIC INTRINSIC FACTOR"/>
    <property type="match status" value="1"/>
</dbReference>
<dbReference type="PANTHER" id="PTHR10559:SF14">
    <property type="entry name" value="TRANSCOBALAMIN-2"/>
    <property type="match status" value="1"/>
</dbReference>
<dbReference type="Pfam" id="PF01122">
    <property type="entry name" value="Cobalamin_bind"/>
    <property type="match status" value="1"/>
</dbReference>
<dbReference type="PROSITE" id="PS00468">
    <property type="entry name" value="COBALAMIN_BINDING"/>
    <property type="match status" value="1"/>
</dbReference>
<evidence type="ECO:0000250" key="1"/>
<evidence type="ECO:0000250" key="2">
    <source>
        <dbReference type="UniProtKB" id="P20062"/>
    </source>
</evidence>
<evidence type="ECO:0000305" key="3"/>